<accession>A0A084AFG8</accession>
<evidence type="ECO:0000255" key="1">
    <source>
        <dbReference type="PROSITE-ProRule" id="PRU00532"/>
    </source>
</evidence>
<evidence type="ECO:0000269" key="2">
    <source>
    </source>
</evidence>
<evidence type="ECO:0000303" key="3">
    <source>
    </source>
</evidence>
<evidence type="ECO:0000305" key="4"/>
<evidence type="ECO:0000305" key="5">
    <source>
    </source>
</evidence>
<comment type="function">
    <text evidence="5">Acetyltransferase; part of the satratoxin SC3 cluster involved in the biosynthesis of satratoxins, trichothecene mycotoxins that are associated with human food poisonings (PubMed:25015739). Satratoxins are suggested to be made by products of multiple gene clusters (SC1, SC2 and SC3) that encode 21 proteins in all, including polyketide synthases, acetyltransferases, and other enzymes expected to modify the trichothecene skeleton (PubMed:25015739). SC1 encodes 10 proteins, SAT1 to SAT10 (PubMed:25015739). The largest are SAT8, which encodes a putative polyketide synthase (PKS) with a conventional non-reducing architecture, and SAT10, a putative protein containing four ankyrin repeats and thus may be involved in protein scaffolding (PubMed:25015739). The putative short-chain reductase SAT3 may assist the PKS in some capacity (PubMed:25015739). SAT6 contains a secretory lipase domain and acts probably as a trichothecene esterase (PubMed:25015739). SAT5 encodes a putative acetyltransferase, and so, with SAT6, may affect endogenous protection from toxicity (PubMed:25015739). The probable transcription factor SAT9 may regulate the expression of the SC1 cluster (PubMed:25015739). SC2 encodes proteins SAT11 to SAT16, the largest of which encodes the putative reducing PKS SAT13 (PubMed:25015739). SAT11 is a cytochrome P450 monooxygenase, while SAT14 and SAT16 are probable acetyltransferases (PubMed:25015739). The SC2 cluster may be regulated by the transcription factor SAT15 (PubMed:25015739). SC3 is a small cluster that encodes 5 proteins, SAT17 to SAT21 (PubMed:25015739). SAT21 is a putative MFS-type transporter which may have a role in exporting secondary metabolites (PubMed:25015739). The four other proteins putatively encoded in SC3 include the taurine hydroxylase-like protein SAT17, the O-methyltransferase SAT18, the acetyltransferase SAT19, and the Cys6-type zinc finger SAT20, the latter being probably involved in regulation of SC3 expression (PubMed:25015739).</text>
</comment>
<comment type="pathway">
    <text evidence="2">Mycotoxin biosynthesis.</text>
</comment>
<comment type="miscellaneous">
    <text evidence="4">Trichothecenes are sesquiterpenoid toxins that act by inhibiting protein biosynthesis.</text>
</comment>
<dbReference type="EC" id="2.3.1.-" evidence="1"/>
<dbReference type="EMBL" id="KL648755">
    <property type="protein sequence ID" value="KEY64047.1"/>
    <property type="molecule type" value="Genomic_DNA"/>
</dbReference>
<dbReference type="HOGENOM" id="CLU_072853_0_0_1"/>
<dbReference type="OrthoDB" id="294711at5125"/>
<dbReference type="Proteomes" id="UP000028045">
    <property type="component" value="Unassembled WGS sequence"/>
</dbReference>
<dbReference type="GO" id="GO:0016746">
    <property type="term" value="F:acyltransferase activity"/>
    <property type="evidence" value="ECO:0007669"/>
    <property type="project" value="UniProtKB-KW"/>
</dbReference>
<dbReference type="CDD" id="cd04301">
    <property type="entry name" value="NAT_SF"/>
    <property type="match status" value="1"/>
</dbReference>
<dbReference type="Gene3D" id="3.40.630.30">
    <property type="match status" value="1"/>
</dbReference>
<dbReference type="InterPro" id="IPR016181">
    <property type="entry name" value="Acyl_CoA_acyltransferase"/>
</dbReference>
<dbReference type="InterPro" id="IPR052523">
    <property type="entry name" value="Trichothecene_AcTrans"/>
</dbReference>
<dbReference type="PANTHER" id="PTHR42791">
    <property type="entry name" value="GNAT FAMILY ACETYLTRANSFERASE"/>
    <property type="match status" value="1"/>
</dbReference>
<dbReference type="PANTHER" id="PTHR42791:SF1">
    <property type="entry name" value="N-ACETYLTRANSFERASE DOMAIN-CONTAINING PROTEIN"/>
    <property type="match status" value="1"/>
</dbReference>
<dbReference type="SUPFAM" id="SSF55729">
    <property type="entry name" value="Acyl-CoA N-acyltransferases (Nat)"/>
    <property type="match status" value="1"/>
</dbReference>
<organism>
    <name type="scientific">Stachybotrys chartarum (strain CBS 109288 / IBT 7711)</name>
    <name type="common">Toxic black mold</name>
    <name type="synonym">Stilbospora chartarum</name>
    <dbReference type="NCBI Taxonomy" id="1280523"/>
    <lineage>
        <taxon>Eukaryota</taxon>
        <taxon>Fungi</taxon>
        <taxon>Dikarya</taxon>
        <taxon>Ascomycota</taxon>
        <taxon>Pezizomycotina</taxon>
        <taxon>Sordariomycetes</taxon>
        <taxon>Hypocreomycetidae</taxon>
        <taxon>Hypocreales</taxon>
        <taxon>Stachybotryaceae</taxon>
        <taxon>Stachybotrys</taxon>
    </lineage>
</organism>
<sequence>MATATPPPQDFPPYPPFTSLRLAAARDVAQMANLSVQGFKDSEIFRYERPGHDQYPEDAVAYFANLYRDRLEDPRAVVIVAEDWDGAERVVVGVGCWILPQDSPRTGQFVVPCVGDREPALDRDLCCRRLELFNAVTKATEERYLDGKVICDKFVVHPSYQRRGHGTAMLRWSLRLCTQDTVDQGVIPSHVGEPVYLSLGFEVIGEMHVPDEGDTQGFTQRVAVYKARQT</sequence>
<proteinExistence type="predicted"/>
<protein>
    <recommendedName>
        <fullName evidence="3">Acetyltransferase</fullName>
        <ecNumber evidence="1">2.3.1.-</ecNumber>
    </recommendedName>
    <alternativeName>
        <fullName evidence="3">Satratoxin biosynthesis SC3 cluster protein 19</fullName>
    </alternativeName>
</protein>
<keyword id="KW-0012">Acyltransferase</keyword>
<keyword id="KW-0808">Transferase</keyword>
<reference key="1">
    <citation type="journal article" date="2014" name="BMC Genomics">
        <title>Comparative genome sequencing reveals chemotype-specific gene clusters in the toxigenic black mold Stachybotrys.</title>
        <authorList>
            <person name="Semeiks J."/>
            <person name="Borek D."/>
            <person name="Otwinowski Z."/>
            <person name="Grishin N.V."/>
        </authorList>
    </citation>
    <scope>NUCLEOTIDE SEQUENCE [LARGE SCALE GENOMIC DNA]</scope>
    <scope>IDENTIFICATION</scope>
    <scope>FUNCTION</scope>
    <source>
        <strain>CBS 109288 / IBT 7711</strain>
    </source>
</reference>
<feature type="chain" id="PRO_0000442398" description="Acetyltransferase">
    <location>
        <begin position="1"/>
        <end position="230"/>
    </location>
</feature>
<feature type="domain" description="N-acetyltransferase" evidence="1">
    <location>
        <begin position="143"/>
        <end position="230"/>
    </location>
</feature>
<gene>
    <name evidence="3" type="primary">SAT19</name>
    <name type="ORF">S7711_11146</name>
</gene>
<name>SAT19_STACB</name>